<reference key="1">
    <citation type="journal article" date="2003" name="Curr. Biol.">
        <title>Root-specific CLE19 overexpression and the sol1/2 suppressors implicate a CLV-like pathway in the control of Arabidopsis root meristem maintenance.</title>
        <authorList>
            <person name="Casamitjana-Martinez E."/>
            <person name="Hofhuis H.F."/>
            <person name="Xu J."/>
            <person name="Liu C.-M."/>
            <person name="Heidstra R."/>
            <person name="Scheres B."/>
        </authorList>
    </citation>
    <scope>NUCLEOTIDE SEQUENCE [MRNA]</scope>
    <scope>FUNCTION</scope>
    <scope>TISSUE SPECIFICITY</scope>
</reference>
<reference key="2">
    <citation type="journal article" date="2000" name="Nature">
        <title>Sequence and analysis of chromosome 1 of the plant Arabidopsis thaliana.</title>
        <authorList>
            <person name="Theologis A."/>
            <person name="Ecker J.R."/>
            <person name="Palm C.J."/>
            <person name="Federspiel N.A."/>
            <person name="Kaul S."/>
            <person name="White O."/>
            <person name="Alonso J."/>
            <person name="Altafi H."/>
            <person name="Araujo R."/>
            <person name="Bowman C.L."/>
            <person name="Brooks S.Y."/>
            <person name="Buehler E."/>
            <person name="Chan A."/>
            <person name="Chao Q."/>
            <person name="Chen H."/>
            <person name="Cheuk R.F."/>
            <person name="Chin C.W."/>
            <person name="Chung M.K."/>
            <person name="Conn L."/>
            <person name="Conway A.B."/>
            <person name="Conway A.R."/>
            <person name="Creasy T.H."/>
            <person name="Dewar K."/>
            <person name="Dunn P."/>
            <person name="Etgu P."/>
            <person name="Feldblyum T.V."/>
            <person name="Feng J.-D."/>
            <person name="Fong B."/>
            <person name="Fujii C.Y."/>
            <person name="Gill J.E."/>
            <person name="Goldsmith A.D."/>
            <person name="Haas B."/>
            <person name="Hansen N.F."/>
            <person name="Hughes B."/>
            <person name="Huizar L."/>
            <person name="Hunter J.L."/>
            <person name="Jenkins J."/>
            <person name="Johnson-Hopson C."/>
            <person name="Khan S."/>
            <person name="Khaykin E."/>
            <person name="Kim C.J."/>
            <person name="Koo H.L."/>
            <person name="Kremenetskaia I."/>
            <person name="Kurtz D.B."/>
            <person name="Kwan A."/>
            <person name="Lam B."/>
            <person name="Langin-Hooper S."/>
            <person name="Lee A."/>
            <person name="Lee J.M."/>
            <person name="Lenz C.A."/>
            <person name="Li J.H."/>
            <person name="Li Y.-P."/>
            <person name="Lin X."/>
            <person name="Liu S.X."/>
            <person name="Liu Z.A."/>
            <person name="Luros J.S."/>
            <person name="Maiti R."/>
            <person name="Marziali A."/>
            <person name="Militscher J."/>
            <person name="Miranda M."/>
            <person name="Nguyen M."/>
            <person name="Nierman W.C."/>
            <person name="Osborne B.I."/>
            <person name="Pai G."/>
            <person name="Peterson J."/>
            <person name="Pham P.K."/>
            <person name="Rizzo M."/>
            <person name="Rooney T."/>
            <person name="Rowley D."/>
            <person name="Sakano H."/>
            <person name="Salzberg S.L."/>
            <person name="Schwartz J.R."/>
            <person name="Shinn P."/>
            <person name="Southwick A.M."/>
            <person name="Sun H."/>
            <person name="Tallon L.J."/>
            <person name="Tambunga G."/>
            <person name="Toriumi M.J."/>
            <person name="Town C.D."/>
            <person name="Utterback T."/>
            <person name="Van Aken S."/>
            <person name="Vaysberg M."/>
            <person name="Vysotskaia V.S."/>
            <person name="Walker M."/>
            <person name="Wu D."/>
            <person name="Yu G."/>
            <person name="Fraser C.M."/>
            <person name="Venter J.C."/>
            <person name="Davis R.W."/>
        </authorList>
    </citation>
    <scope>NUCLEOTIDE SEQUENCE [LARGE SCALE GENOMIC DNA]</scope>
    <source>
        <strain>cv. Columbia</strain>
    </source>
</reference>
<reference key="3">
    <citation type="journal article" date="2017" name="Plant J.">
        <title>Araport11: a complete reannotation of the Arabidopsis thaliana reference genome.</title>
        <authorList>
            <person name="Cheng C.Y."/>
            <person name="Krishnakumar V."/>
            <person name="Chan A.P."/>
            <person name="Thibaud-Nissen F."/>
            <person name="Schobel S."/>
            <person name="Town C.D."/>
        </authorList>
    </citation>
    <scope>GENOME REANNOTATION</scope>
    <source>
        <strain>cv. Columbia</strain>
    </source>
</reference>
<reference key="4">
    <citation type="journal article" date="2013" name="Plant J.">
        <title>SUPPRESSOR OF LLP1 1-mediated C-terminal processing is critical for CLE19 peptide activity.</title>
        <authorList>
            <person name="Tamaki T."/>
            <person name="Betsuyaku S."/>
            <person name="Fujiwara M."/>
            <person name="Fukao Y."/>
            <person name="Fukuda H."/>
            <person name="Sawa S."/>
        </authorList>
    </citation>
    <scope>FUNCTION</scope>
    <scope>SUBCELLULAR LOCATION</scope>
</reference>
<name>SOL1_ARATH</name>
<organism>
    <name type="scientific">Arabidopsis thaliana</name>
    <name type="common">Mouse-ear cress</name>
    <dbReference type="NCBI Taxonomy" id="3702"/>
    <lineage>
        <taxon>Eukaryota</taxon>
        <taxon>Viridiplantae</taxon>
        <taxon>Streptophyta</taxon>
        <taxon>Embryophyta</taxon>
        <taxon>Tracheophyta</taxon>
        <taxon>Spermatophyta</taxon>
        <taxon>Magnoliopsida</taxon>
        <taxon>eudicotyledons</taxon>
        <taxon>Gunneridae</taxon>
        <taxon>Pentapetalae</taxon>
        <taxon>rosids</taxon>
        <taxon>malvids</taxon>
        <taxon>Brassicales</taxon>
        <taxon>Brassicaceae</taxon>
        <taxon>Camelineae</taxon>
        <taxon>Arabidopsis</taxon>
    </lineage>
</organism>
<keyword id="KW-0025">Alternative splicing</keyword>
<keyword id="KW-0121">Carboxypeptidase</keyword>
<keyword id="KW-0967">Endosome</keyword>
<keyword id="KW-0325">Glycoprotein</keyword>
<keyword id="KW-0378">Hydrolase</keyword>
<keyword id="KW-0472">Membrane</keyword>
<keyword id="KW-0479">Metal-binding</keyword>
<keyword id="KW-0645">Protease</keyword>
<keyword id="KW-1185">Reference proteome</keyword>
<keyword id="KW-0732">Signal</keyword>
<keyword id="KW-0812">Transmembrane</keyword>
<keyword id="KW-1133">Transmembrane helix</keyword>
<keyword id="KW-0862">Zinc</keyword>
<dbReference type="EC" id="3.4.17.-"/>
<dbReference type="EMBL" id="AJ555410">
    <property type="protein sequence ID" value="CAD87769.1"/>
    <property type="molecule type" value="mRNA"/>
</dbReference>
<dbReference type="EMBL" id="AC012654">
    <property type="protein sequence ID" value="AAF43222.1"/>
    <property type="molecule type" value="Genomic_DNA"/>
</dbReference>
<dbReference type="EMBL" id="AC016163">
    <property type="protein sequence ID" value="AAG51831.1"/>
    <property type="status" value="ALT_SEQ"/>
    <property type="molecule type" value="Genomic_DNA"/>
</dbReference>
<dbReference type="EMBL" id="CP002684">
    <property type="protein sequence ID" value="AEE35219.1"/>
    <property type="molecule type" value="Genomic_DNA"/>
</dbReference>
<dbReference type="PIR" id="B96739">
    <property type="entry name" value="B96739"/>
</dbReference>
<dbReference type="RefSeq" id="NP_974126.1">
    <molecule id="Q9M9H7-1"/>
    <property type="nucleotide sequence ID" value="NM_202397.2"/>
</dbReference>
<dbReference type="SMR" id="Q9M9H7"/>
<dbReference type="FunCoup" id="Q9M9H7">
    <property type="interactions" value="1790"/>
</dbReference>
<dbReference type="STRING" id="3702.Q9M9H7"/>
<dbReference type="MEROPS" id="M14.A02"/>
<dbReference type="GlyCosmos" id="Q9M9H7">
    <property type="glycosylation" value="2 sites, No reported glycans"/>
</dbReference>
<dbReference type="GlyGen" id="Q9M9H7">
    <property type="glycosylation" value="3 sites"/>
</dbReference>
<dbReference type="iPTMnet" id="Q9M9H7"/>
<dbReference type="PaxDb" id="3702-AT1G71696.2"/>
<dbReference type="ProteomicsDB" id="232479">
    <molecule id="Q9M9H7-1"/>
</dbReference>
<dbReference type="EnsemblPlants" id="AT1G71696.2">
    <molecule id="Q9M9H7-1"/>
    <property type="protein sequence ID" value="AT1G71696.2"/>
    <property type="gene ID" value="AT1G71696"/>
</dbReference>
<dbReference type="GeneID" id="843499"/>
<dbReference type="Gramene" id="AT1G71696.2">
    <molecule id="Q9M9H7-1"/>
    <property type="protein sequence ID" value="AT1G71696.2"/>
    <property type="gene ID" value="AT1G71696"/>
</dbReference>
<dbReference type="KEGG" id="ath:AT1G71696"/>
<dbReference type="Araport" id="AT1G71696"/>
<dbReference type="TAIR" id="AT1G71696">
    <property type="gene designation" value="SOL1"/>
</dbReference>
<dbReference type="eggNOG" id="KOG2649">
    <property type="taxonomic scope" value="Eukaryota"/>
</dbReference>
<dbReference type="InParanoid" id="Q9M9H7"/>
<dbReference type="PhylomeDB" id="Q9M9H7"/>
<dbReference type="PRO" id="PR:Q9M9H7"/>
<dbReference type="Proteomes" id="UP000006548">
    <property type="component" value="Chromosome 1"/>
</dbReference>
<dbReference type="ExpressionAtlas" id="Q9M9H7">
    <property type="expression patterns" value="baseline and differential"/>
</dbReference>
<dbReference type="GO" id="GO:0010008">
    <property type="term" value="C:endosome membrane"/>
    <property type="evidence" value="ECO:0000314"/>
    <property type="project" value="UniProtKB"/>
</dbReference>
<dbReference type="GO" id="GO:0004181">
    <property type="term" value="F:metallocarboxypeptidase activity"/>
    <property type="evidence" value="ECO:0000314"/>
    <property type="project" value="UniProtKB"/>
</dbReference>
<dbReference type="GO" id="GO:0008270">
    <property type="term" value="F:zinc ion binding"/>
    <property type="evidence" value="ECO:0007669"/>
    <property type="project" value="InterPro"/>
</dbReference>
<dbReference type="GO" id="GO:0006508">
    <property type="term" value="P:proteolysis"/>
    <property type="evidence" value="ECO:0007669"/>
    <property type="project" value="UniProtKB-KW"/>
</dbReference>
<dbReference type="CDD" id="cd18172">
    <property type="entry name" value="M14_CP_plant"/>
    <property type="match status" value="1"/>
</dbReference>
<dbReference type="CDD" id="cd11308">
    <property type="entry name" value="Peptidase_M14NE-CP-C_like"/>
    <property type="match status" value="1"/>
</dbReference>
<dbReference type="FunFam" id="2.60.40.1120:FF:000018">
    <property type="entry name" value="Carboxypeptidase D"/>
    <property type="match status" value="1"/>
</dbReference>
<dbReference type="FunFam" id="3.40.630.10:FF:000020">
    <property type="entry name" value="Carboxypeptidase D"/>
    <property type="match status" value="1"/>
</dbReference>
<dbReference type="Gene3D" id="2.60.40.1120">
    <property type="entry name" value="Carboxypeptidase-like, regulatory domain"/>
    <property type="match status" value="1"/>
</dbReference>
<dbReference type="Gene3D" id="3.40.630.10">
    <property type="entry name" value="Zn peptidases"/>
    <property type="match status" value="1"/>
</dbReference>
<dbReference type="InterPro" id="IPR008969">
    <property type="entry name" value="CarboxyPept-like_regulatory"/>
</dbReference>
<dbReference type="InterPro" id="IPR000834">
    <property type="entry name" value="Peptidase_M14"/>
</dbReference>
<dbReference type="InterPro" id="IPR050753">
    <property type="entry name" value="Peptidase_M14_domain"/>
</dbReference>
<dbReference type="PANTHER" id="PTHR11532:SF57">
    <property type="entry name" value="CARBOXYPEPTIDASE D, B"/>
    <property type="match status" value="1"/>
</dbReference>
<dbReference type="PANTHER" id="PTHR11532">
    <property type="entry name" value="PROTEASE M14 CARBOXYPEPTIDASE"/>
    <property type="match status" value="1"/>
</dbReference>
<dbReference type="Pfam" id="PF00246">
    <property type="entry name" value="Peptidase_M14"/>
    <property type="match status" value="1"/>
</dbReference>
<dbReference type="PRINTS" id="PR00765">
    <property type="entry name" value="CRBOXYPTASEA"/>
</dbReference>
<dbReference type="SMART" id="SM00631">
    <property type="entry name" value="Zn_pept"/>
    <property type="match status" value="1"/>
</dbReference>
<dbReference type="SUPFAM" id="SSF49464">
    <property type="entry name" value="Carboxypeptidase regulatory domain-like"/>
    <property type="match status" value="1"/>
</dbReference>
<dbReference type="SUPFAM" id="SSF53187">
    <property type="entry name" value="Zn-dependent exopeptidases"/>
    <property type="match status" value="1"/>
</dbReference>
<dbReference type="PROSITE" id="PS00132">
    <property type="entry name" value="CARBOXYPEPT_ZN_1"/>
    <property type="match status" value="1"/>
</dbReference>
<dbReference type="PROSITE" id="PS00133">
    <property type="entry name" value="CARBOXYPEPT_ZN_2"/>
    <property type="match status" value="1"/>
</dbReference>
<dbReference type="PROSITE" id="PS52035">
    <property type="entry name" value="PEPTIDASE_M14"/>
    <property type="match status" value="1"/>
</dbReference>
<accession>Q9M9H7</accession>
<accession>Q9C9J2</accession>
<protein>
    <recommendedName>
        <fullName>Carboxypeptidase SOL1</fullName>
        <ecNumber>3.4.17.-</ecNumber>
    </recommendedName>
    <alternativeName>
        <fullName evidence="7">Protein SUPPRESSOR OF LLP1 1</fullName>
    </alternativeName>
</protein>
<sequence length="491" mass="56046">MSKLRFFQSLLISTVICFFLPSINARGGHSDHIHPGDGNYSFHGIVRHLFAQEEPTPSLELTRGYMTNDDLEKAMKDFTKRCSKISRLYSIGKSVNGFPLWVIEISDRPGEIEAEPAFKYIGNVHGDEPVGRELLLRLANWICDNYKKDPLAQMIVENVHLHIMPSLNPDGFSIRKRNNANNVDLNRDFPDQFFPFNDDLNLRQPETKAIMTWLRDIRFTASATLHGGALVANFPWDGTEDKRKYYYACPDDETFRFLARIYSKSHRNMSLSKEFEEGITNGASWYPIYGGMQDWNYIYGGCFELTLEISDNKWPKASELSTIWDYNRKSMLNLVASLVKTGVHGRIFSLDKGKPLPGLVVVKGINYTVKAHQTYADYHRLLVPGQKYEVTASSPGYKSKTTTVWLGENAVTADFILIPETSSRGNQLRSSCDCSCKSCGQPLLTQFFTETNNGITLTLFVVVVFLCFLLQRRVRFNLWKQRQSSRRSITV</sequence>
<gene>
    <name evidence="7" type="primary">SOL1</name>
    <name evidence="10" type="ordered locus">At1g71696</name>
    <name evidence="11" type="ORF">F14O23.7</name>
    <name evidence="12" type="ORF">F26A9.4</name>
</gene>
<proteinExistence type="evidence at transcript level"/>
<comment type="function">
    <text evidence="5 6">Possesses in vitro carboxypeptidase activity against the C-terminal arginine and lysine residues. Involved in the maturation of CLE19. Removes the C-terminal arginine residue of CLE19 proprotein. The cleavage of the C-terminal arginine residue is necessary for CLE19 activity in vivo. Is not involved in generating active CLV3 (PubMed:24118638). Is not involved in CLE19 or CLV3 perception (PubMed:12932329, PubMed:24118638).</text>
</comment>
<comment type="cofactor">
    <cofactor evidence="1">
        <name>Zn(2+)</name>
        <dbReference type="ChEBI" id="CHEBI:29105"/>
    </cofactor>
    <text evidence="1">Binds 1 zinc ion per subunit.</text>
</comment>
<comment type="subcellular location">
    <subcellularLocation>
        <location evidence="6">Endosome membrane</location>
        <topology evidence="2">Single-pass type I membrane protein</topology>
    </subcellularLocation>
</comment>
<comment type="alternative products">
    <event type="alternative splicing"/>
    <isoform>
        <id>Q9M9H7-1</id>
        <name>1</name>
        <sequence type="displayed"/>
    </isoform>
    <text evidence="8">A number of isoforms are produced. According to EST sequences.</text>
</comment>
<comment type="tissue specificity">
    <text evidence="5">Expressed in roots, shoots, leaves, flowers and siliques.</text>
</comment>
<comment type="similarity">
    <text evidence="8">Belongs to the peptidase M14 family.</text>
</comment>
<comment type="sequence caution" evidence="8">
    <conflict type="erroneous gene model prediction">
        <sequence resource="EMBL-CDS" id="AAG51831"/>
    </conflict>
</comment>
<feature type="signal peptide" evidence="2">
    <location>
        <begin position="1"/>
        <end position="25"/>
    </location>
</feature>
<feature type="chain" id="PRO_0000434547" description="Carboxypeptidase SOL1" evidence="2">
    <location>
        <begin position="26"/>
        <end position="491"/>
    </location>
</feature>
<feature type="topological domain" description="Extracellular" evidence="8">
    <location>
        <begin position="26"/>
        <end position="452"/>
    </location>
</feature>
<feature type="transmembrane region" description="Helical" evidence="2">
    <location>
        <begin position="453"/>
        <end position="470"/>
    </location>
</feature>
<feature type="topological domain" description="Cytoplasmic" evidence="8">
    <location>
        <begin position="471"/>
        <end position="491"/>
    </location>
</feature>
<feature type="domain" description="Peptidase M14" evidence="4">
    <location>
        <begin position="64"/>
        <end position="338"/>
    </location>
</feature>
<feature type="active site" description="Proton donor/acceptor" evidence="4 9">
    <location>
        <position position="308"/>
    </location>
</feature>
<feature type="binding site" evidence="1">
    <location>
        <begin position="125"/>
        <end position="128"/>
    </location>
    <ligand>
        <name>substrate</name>
    </ligand>
</feature>
<feature type="binding site" evidence="4">
    <location>
        <position position="125"/>
    </location>
    <ligand>
        <name>Zn(2+)</name>
        <dbReference type="ChEBI" id="CHEBI:29105"/>
        <note>catalytic</note>
    </ligand>
</feature>
<feature type="binding site" evidence="4">
    <location>
        <position position="128"/>
    </location>
    <ligand>
        <name>Zn(2+)</name>
        <dbReference type="ChEBI" id="CHEBI:29105"/>
        <note>catalytic</note>
    </ligand>
</feature>
<feature type="binding site" evidence="1">
    <location>
        <begin position="186"/>
        <end position="187"/>
    </location>
    <ligand>
        <name>substrate</name>
    </ligand>
</feature>
<feature type="binding site" evidence="4">
    <location>
        <position position="226"/>
    </location>
    <ligand>
        <name>Zn(2+)</name>
        <dbReference type="ChEBI" id="CHEBI:29105"/>
        <note>catalytic</note>
    </ligand>
</feature>
<feature type="binding site" evidence="1">
    <location>
        <position position="286"/>
    </location>
    <ligand>
        <name>substrate</name>
    </ligand>
</feature>
<feature type="glycosylation site" description="N-linked (GlcNAc...) asparagine" evidence="3">
    <location>
        <position position="39"/>
    </location>
</feature>
<feature type="glycosylation site" description="N-linked (GlcNAc...) asparagine" evidence="3">
    <location>
        <position position="268"/>
    </location>
</feature>
<evidence type="ECO:0000250" key="1">
    <source>
        <dbReference type="UniProtKB" id="P15085"/>
    </source>
</evidence>
<evidence type="ECO:0000255" key="2"/>
<evidence type="ECO:0000255" key="3">
    <source>
        <dbReference type="PROSITE-ProRule" id="PRU00498"/>
    </source>
</evidence>
<evidence type="ECO:0000255" key="4">
    <source>
        <dbReference type="PROSITE-ProRule" id="PRU01379"/>
    </source>
</evidence>
<evidence type="ECO:0000269" key="5">
    <source>
    </source>
</evidence>
<evidence type="ECO:0000269" key="6">
    <source>
    </source>
</evidence>
<evidence type="ECO:0000303" key="7">
    <source>
    </source>
</evidence>
<evidence type="ECO:0000305" key="8"/>
<evidence type="ECO:0000305" key="9">
    <source>
    </source>
</evidence>
<evidence type="ECO:0000312" key="10">
    <source>
        <dbReference type="Araport" id="AT1G71696"/>
    </source>
</evidence>
<evidence type="ECO:0000312" key="11">
    <source>
        <dbReference type="EMBL" id="AAF43222.1"/>
    </source>
</evidence>
<evidence type="ECO:0000312" key="12">
    <source>
        <dbReference type="EMBL" id="AAG51831.1"/>
    </source>
</evidence>